<protein>
    <recommendedName>
        <fullName evidence="1">NAD(P)H-quinone oxidoreductase subunit 3</fullName>
        <ecNumber evidence="1">7.1.1.-</ecNumber>
    </recommendedName>
    <alternativeName>
        <fullName evidence="1">NAD(P)H dehydrogenase subunit 3</fullName>
    </alternativeName>
    <alternativeName>
        <fullName evidence="1">NADH-plastoquinone oxidoreductase subunit 3</fullName>
    </alternativeName>
    <alternativeName>
        <fullName evidence="1">NDH-1 subunit 3</fullName>
        <shortName evidence="1">NDH-C</shortName>
    </alternativeName>
</protein>
<feature type="chain" id="PRO_0000362721" description="NAD(P)H-quinone oxidoreductase subunit 3">
    <location>
        <begin position="1"/>
        <end position="120"/>
    </location>
</feature>
<feature type="transmembrane region" description="Helical" evidence="1">
    <location>
        <begin position="10"/>
        <end position="30"/>
    </location>
</feature>
<feature type="transmembrane region" description="Helical" evidence="1">
    <location>
        <begin position="64"/>
        <end position="84"/>
    </location>
</feature>
<feature type="transmembrane region" description="Helical" evidence="1">
    <location>
        <begin position="89"/>
        <end position="109"/>
    </location>
</feature>
<keyword id="KW-0472">Membrane</keyword>
<keyword id="KW-0520">NAD</keyword>
<keyword id="KW-0521">NADP</keyword>
<keyword id="KW-0618">Plastoquinone</keyword>
<keyword id="KW-0874">Quinone</keyword>
<keyword id="KW-0793">Thylakoid</keyword>
<keyword id="KW-1278">Translocase</keyword>
<keyword id="KW-0812">Transmembrane</keyword>
<keyword id="KW-1133">Transmembrane helix</keyword>
<keyword id="KW-0813">Transport</keyword>
<name>NU3C_PROM2</name>
<gene>
    <name evidence="1" type="primary">ndhC</name>
    <name type="ordered locus">P9215_03191</name>
</gene>
<organism>
    <name type="scientific">Prochlorococcus marinus (strain MIT 9215)</name>
    <dbReference type="NCBI Taxonomy" id="93060"/>
    <lineage>
        <taxon>Bacteria</taxon>
        <taxon>Bacillati</taxon>
        <taxon>Cyanobacteriota</taxon>
        <taxon>Cyanophyceae</taxon>
        <taxon>Synechococcales</taxon>
        <taxon>Prochlorococcaceae</taxon>
        <taxon>Prochlorococcus</taxon>
    </lineage>
</organism>
<proteinExistence type="inferred from homology"/>
<sequence>MFLLSGYEYFLGFLLIAAAVPILALVTNLIVAPKGRNGERKLTYESGMEPIGGAWIQFNIRYYMFALVFVIFDVETVFLYPWAVAFNRLGLLAFIEALIFIAILVIALAYAWRKGALEWS</sequence>
<accession>A8G2V5</accession>
<evidence type="ECO:0000255" key="1">
    <source>
        <dbReference type="HAMAP-Rule" id="MF_01394"/>
    </source>
</evidence>
<reference key="1">
    <citation type="journal article" date="2007" name="PLoS Genet.">
        <title>Patterns and implications of gene gain and loss in the evolution of Prochlorococcus.</title>
        <authorList>
            <person name="Kettler G.C."/>
            <person name="Martiny A.C."/>
            <person name="Huang K."/>
            <person name="Zucker J."/>
            <person name="Coleman M.L."/>
            <person name="Rodrigue S."/>
            <person name="Chen F."/>
            <person name="Lapidus A."/>
            <person name="Ferriera S."/>
            <person name="Johnson J."/>
            <person name="Steglich C."/>
            <person name="Church G.M."/>
            <person name="Richardson P."/>
            <person name="Chisholm S.W."/>
        </authorList>
    </citation>
    <scope>NUCLEOTIDE SEQUENCE [LARGE SCALE GENOMIC DNA]</scope>
    <source>
        <strain>MIT 9215</strain>
    </source>
</reference>
<dbReference type="EC" id="7.1.1.-" evidence="1"/>
<dbReference type="EMBL" id="CP000825">
    <property type="protein sequence ID" value="ABV49936.1"/>
    <property type="molecule type" value="Genomic_DNA"/>
</dbReference>
<dbReference type="RefSeq" id="WP_012007093.1">
    <property type="nucleotide sequence ID" value="NC_009840.1"/>
</dbReference>
<dbReference type="SMR" id="A8G2V5"/>
<dbReference type="STRING" id="93060.P9215_03191"/>
<dbReference type="KEGG" id="pmh:P9215_03191"/>
<dbReference type="eggNOG" id="COG0838">
    <property type="taxonomic scope" value="Bacteria"/>
</dbReference>
<dbReference type="HOGENOM" id="CLU_119549_1_1_3"/>
<dbReference type="OrthoDB" id="9791970at2"/>
<dbReference type="Proteomes" id="UP000002014">
    <property type="component" value="Chromosome"/>
</dbReference>
<dbReference type="GO" id="GO:0030964">
    <property type="term" value="C:NADH dehydrogenase complex"/>
    <property type="evidence" value="ECO:0007669"/>
    <property type="project" value="TreeGrafter"/>
</dbReference>
<dbReference type="GO" id="GO:0031676">
    <property type="term" value="C:plasma membrane-derived thylakoid membrane"/>
    <property type="evidence" value="ECO:0007669"/>
    <property type="project" value="UniProtKB-SubCell"/>
</dbReference>
<dbReference type="GO" id="GO:0008137">
    <property type="term" value="F:NADH dehydrogenase (ubiquinone) activity"/>
    <property type="evidence" value="ECO:0007669"/>
    <property type="project" value="InterPro"/>
</dbReference>
<dbReference type="GO" id="GO:0048038">
    <property type="term" value="F:quinone binding"/>
    <property type="evidence" value="ECO:0007669"/>
    <property type="project" value="UniProtKB-KW"/>
</dbReference>
<dbReference type="GO" id="GO:0019684">
    <property type="term" value="P:photosynthesis, light reaction"/>
    <property type="evidence" value="ECO:0007669"/>
    <property type="project" value="UniProtKB-UniRule"/>
</dbReference>
<dbReference type="Gene3D" id="1.20.58.1610">
    <property type="entry name" value="NADH:ubiquinone/plastoquinone oxidoreductase, chain 3"/>
    <property type="match status" value="1"/>
</dbReference>
<dbReference type="HAMAP" id="MF_01394">
    <property type="entry name" value="NDH1_NuoA"/>
    <property type="match status" value="1"/>
</dbReference>
<dbReference type="InterPro" id="IPR023043">
    <property type="entry name" value="NAD(P)H_OxRDtase_bac/plastid"/>
</dbReference>
<dbReference type="InterPro" id="IPR000440">
    <property type="entry name" value="NADH_UbQ/plastoQ_OxRdtase_su3"/>
</dbReference>
<dbReference type="InterPro" id="IPR038430">
    <property type="entry name" value="NDAH_ubi_oxred_su3_sf"/>
</dbReference>
<dbReference type="PANTHER" id="PTHR11058">
    <property type="entry name" value="NADH-UBIQUINONE OXIDOREDUCTASE CHAIN 3"/>
    <property type="match status" value="1"/>
</dbReference>
<dbReference type="PANTHER" id="PTHR11058:SF9">
    <property type="entry name" value="NADH-UBIQUINONE OXIDOREDUCTASE CHAIN 3"/>
    <property type="match status" value="1"/>
</dbReference>
<dbReference type="Pfam" id="PF00507">
    <property type="entry name" value="Oxidored_q4"/>
    <property type="match status" value="1"/>
</dbReference>
<comment type="function">
    <text evidence="1">NDH-1 shuttles electrons from an unknown electron donor, via FMN and iron-sulfur (Fe-S) centers, to quinones in the respiratory and/or the photosynthetic chain. The immediate electron acceptor for the enzyme in this species is believed to be plastoquinone. Couples the redox reaction to proton translocation, and thus conserves the redox energy in a proton gradient. Cyanobacterial NDH-1 also plays a role in inorganic carbon-concentration.</text>
</comment>
<comment type="catalytic activity">
    <reaction evidence="1">
        <text>a plastoquinone + NADH + (n+1) H(+)(in) = a plastoquinol + NAD(+) + n H(+)(out)</text>
        <dbReference type="Rhea" id="RHEA:42608"/>
        <dbReference type="Rhea" id="RHEA-COMP:9561"/>
        <dbReference type="Rhea" id="RHEA-COMP:9562"/>
        <dbReference type="ChEBI" id="CHEBI:15378"/>
        <dbReference type="ChEBI" id="CHEBI:17757"/>
        <dbReference type="ChEBI" id="CHEBI:57540"/>
        <dbReference type="ChEBI" id="CHEBI:57945"/>
        <dbReference type="ChEBI" id="CHEBI:62192"/>
    </reaction>
</comment>
<comment type="catalytic activity">
    <reaction evidence="1">
        <text>a plastoquinone + NADPH + (n+1) H(+)(in) = a plastoquinol + NADP(+) + n H(+)(out)</text>
        <dbReference type="Rhea" id="RHEA:42612"/>
        <dbReference type="Rhea" id="RHEA-COMP:9561"/>
        <dbReference type="Rhea" id="RHEA-COMP:9562"/>
        <dbReference type="ChEBI" id="CHEBI:15378"/>
        <dbReference type="ChEBI" id="CHEBI:17757"/>
        <dbReference type="ChEBI" id="CHEBI:57783"/>
        <dbReference type="ChEBI" id="CHEBI:58349"/>
        <dbReference type="ChEBI" id="CHEBI:62192"/>
    </reaction>
</comment>
<comment type="subunit">
    <text evidence="1">NDH-1 can be composed of about 15 different subunits; different subcomplexes with different compositions have been identified which probably have different functions.</text>
</comment>
<comment type="subcellular location">
    <subcellularLocation>
        <location evidence="1">Cellular thylakoid membrane</location>
        <topology evidence="1">Multi-pass membrane protein</topology>
    </subcellularLocation>
</comment>
<comment type="similarity">
    <text evidence="1">Belongs to the complex I subunit 3 family.</text>
</comment>